<reference key="1">
    <citation type="journal article" date="2005" name="Nature">
        <title>Genomic sequence of the pathogenic and allergenic filamentous fungus Aspergillus fumigatus.</title>
        <authorList>
            <person name="Nierman W.C."/>
            <person name="Pain A."/>
            <person name="Anderson M.J."/>
            <person name="Wortman J.R."/>
            <person name="Kim H.S."/>
            <person name="Arroyo J."/>
            <person name="Berriman M."/>
            <person name="Abe K."/>
            <person name="Archer D.B."/>
            <person name="Bermejo C."/>
            <person name="Bennett J.W."/>
            <person name="Bowyer P."/>
            <person name="Chen D."/>
            <person name="Collins M."/>
            <person name="Coulsen R."/>
            <person name="Davies R."/>
            <person name="Dyer P.S."/>
            <person name="Farman M.L."/>
            <person name="Fedorova N."/>
            <person name="Fedorova N.D."/>
            <person name="Feldblyum T.V."/>
            <person name="Fischer R."/>
            <person name="Fosker N."/>
            <person name="Fraser A."/>
            <person name="Garcia J.L."/>
            <person name="Garcia M.J."/>
            <person name="Goble A."/>
            <person name="Goldman G.H."/>
            <person name="Gomi K."/>
            <person name="Griffith-Jones S."/>
            <person name="Gwilliam R."/>
            <person name="Haas B.J."/>
            <person name="Haas H."/>
            <person name="Harris D.E."/>
            <person name="Horiuchi H."/>
            <person name="Huang J."/>
            <person name="Humphray S."/>
            <person name="Jimenez J."/>
            <person name="Keller N."/>
            <person name="Khouri H."/>
            <person name="Kitamoto K."/>
            <person name="Kobayashi T."/>
            <person name="Konzack S."/>
            <person name="Kulkarni R."/>
            <person name="Kumagai T."/>
            <person name="Lafton A."/>
            <person name="Latge J.-P."/>
            <person name="Li W."/>
            <person name="Lord A."/>
            <person name="Lu C."/>
            <person name="Majoros W.H."/>
            <person name="May G.S."/>
            <person name="Miller B.L."/>
            <person name="Mohamoud Y."/>
            <person name="Molina M."/>
            <person name="Monod M."/>
            <person name="Mouyna I."/>
            <person name="Mulligan S."/>
            <person name="Murphy L.D."/>
            <person name="O'Neil S."/>
            <person name="Paulsen I."/>
            <person name="Penalva M.A."/>
            <person name="Pertea M."/>
            <person name="Price C."/>
            <person name="Pritchard B.L."/>
            <person name="Quail M.A."/>
            <person name="Rabbinowitsch E."/>
            <person name="Rawlins N."/>
            <person name="Rajandream M.A."/>
            <person name="Reichard U."/>
            <person name="Renauld H."/>
            <person name="Robson G.D."/>
            <person name="Rodriguez de Cordoba S."/>
            <person name="Rodriguez-Pena J.M."/>
            <person name="Ronning C.M."/>
            <person name="Rutter S."/>
            <person name="Salzberg S.L."/>
            <person name="Sanchez M."/>
            <person name="Sanchez-Ferrero J.C."/>
            <person name="Saunders D."/>
            <person name="Seeger K."/>
            <person name="Squares R."/>
            <person name="Squares S."/>
            <person name="Takeuchi M."/>
            <person name="Tekaia F."/>
            <person name="Turner G."/>
            <person name="Vazquez de Aldana C.R."/>
            <person name="Weidman J."/>
            <person name="White O."/>
            <person name="Woodward J.R."/>
            <person name="Yu J.-H."/>
            <person name="Fraser C.M."/>
            <person name="Galagan J.E."/>
            <person name="Asai K."/>
            <person name="Machida M."/>
            <person name="Hall N."/>
            <person name="Barrell B.G."/>
            <person name="Denning D.W."/>
        </authorList>
    </citation>
    <scope>NUCLEOTIDE SEQUENCE [LARGE SCALE GENOMIC DNA]</scope>
    <source>
        <strain>ATCC MYA-4609 / CBS 101355 / FGSC A1100 / Af293</strain>
    </source>
</reference>
<reference key="2">
    <citation type="journal article" date="1995" name="Appl. Environ. Microbiol.">
        <title>Aflavinines and other antiinsectan metabolites from the ascostromata of Eupenicillium crustaceum and related species.</title>
        <authorList>
            <person name="Wang H.J."/>
            <person name="Gloer J.B."/>
            <person name="Wicklow D.T."/>
            <person name="Dowd P.F."/>
        </authorList>
    </citation>
    <scope>BIOTECHNOLOGY</scope>
</reference>
<reference key="3">
    <citation type="journal article" date="2008" name="J. Antibiot.">
        <title>Selectivity of pyripyropene derivatives in inhibition toward acyl-CoA:cholesterol acyltransferase 2 isozyme.</title>
        <authorList>
            <person name="Ohshiro T."/>
            <person name="Ohte S."/>
            <person name="Matsuda D."/>
            <person name="Ohtawa M."/>
            <person name="Nagamitsu T."/>
            <person name="Sunazuka T."/>
            <person name="Harigaya Y."/>
            <person name="Rudel L.L."/>
            <person name="Omura S."/>
            <person name="Tomoda H."/>
        </authorList>
    </citation>
    <scope>BIOTECHNOLOGY</scope>
</reference>
<reference key="4">
    <citation type="journal article" date="2009" name="Biol. Pharm. Bull.">
        <title>Pyripyropenes, fungal sesquiterpenes conjugated with alpha-pyrone and pyridine moieties, exhibits anti-angiogenic activity against human umbilical vein endothelial cells.</title>
        <authorList>
            <person name="Hayashi A."/>
            <person name="Arai M."/>
            <person name="Fujita M."/>
            <person name="Kobayashi M."/>
        </authorList>
    </citation>
    <scope>BIOTECHNOLOGY</scope>
</reference>
<reference key="5">
    <citation type="journal article" date="2010" name="Nat. Chem.">
        <title>Reconstitution of a fungal meroterpenoid biosynthesis reveals the involvement of a novel family of terpene cyclases.</title>
        <authorList>
            <person name="Itoh T."/>
            <person name="Tokunaga K."/>
            <person name="Matsuda Y."/>
            <person name="Fujii I."/>
            <person name="Abe I."/>
            <person name="Ebizuka Y."/>
            <person name="Kushiro T."/>
        </authorList>
    </citation>
    <scope>FUNCTION</scope>
    <scope>CATALYTIC ACTIVITY</scope>
</reference>
<reference key="6">
    <citation type="journal article" date="2011" name="J. Antibiot.">
        <title>Characterization of two cytochrome P450 monooxygenase genes of the pyripyropene biosynthetic gene cluster from Penicillium coprobium.</title>
        <authorList>
            <person name="Hu J."/>
            <person name="Okawa H."/>
            <person name="Yamamoto K."/>
            <person name="Oyama K."/>
            <person name="Mitomi M."/>
            <person name="Anzai H."/>
        </authorList>
    </citation>
    <scope>FUNCTION</scope>
</reference>
<reference key="7">
    <citation type="journal article" date="2014" name="Biotechnol. Biotechnol. Equip.">
        <title>Characterization of two acetyltransferase genes in the pyripyropene biosynthetic gene cluster from Penicillium coprobium.</title>
        <authorList>
            <person name="Hu J."/>
            <person name="Furutani A."/>
            <person name="Yamamoto K."/>
            <person name="Oyama K."/>
            <person name="Mitomi M."/>
            <person name="Anzai H."/>
        </authorList>
    </citation>
    <scope>FUNCTION</scope>
</reference>
<organism>
    <name type="scientific">Aspergillus fumigatus (strain ATCC MYA-4609 / CBS 101355 / FGSC A1100 / Af293)</name>
    <name type="common">Neosartorya fumigata</name>
    <dbReference type="NCBI Taxonomy" id="330879"/>
    <lineage>
        <taxon>Eukaryota</taxon>
        <taxon>Fungi</taxon>
        <taxon>Dikarya</taxon>
        <taxon>Ascomycota</taxon>
        <taxon>Pezizomycotina</taxon>
        <taxon>Eurotiomycetes</taxon>
        <taxon>Eurotiomycetidae</taxon>
        <taxon>Eurotiales</taxon>
        <taxon>Aspergillaceae</taxon>
        <taxon>Aspergillus</taxon>
        <taxon>Aspergillus subgen. Fumigati</taxon>
    </lineage>
</organism>
<sequence length="581" mass="63501">MEPHGETDLVSFAFSSPTPFDPTRPIYLDAQNPSRAFNARQFRLLVRSLIAGLRALGLKPGHCVLVQLENTVIHSALFFAIVGAGGVYMGCDVGSPAHELTHLLRLAEPQLVITAPGALSTLEVCSTQGESFSGQVLLVDELSIDNIVQFAHRAAAAGAEAQTEGLVDQTAGPCIRLESLLQHGESDWLRFEDREQSKRTPAAMFLTSGTSGLPKAAISTHHTIISHHLSVHYRVPYPVVRLMALPMYHSFGDFWTNIFPIRYGEPLYVLPRFDISTFLDAVRQHHISETYMVPAMVQILSQSSLPVAESLASLRYVGISGAPIDGFSIQRFQRLLSPDAVAGNLWGMTEVGVVFQNRYRVPLQFGSVGTLLHGYELRFVDPATGEDVAGTPDSPGELYVRGPGLLLGYKWRTDDKDEQGWFRTGDMVYARDGNYYIIGRTKDLIKVRGQVPDSLNSWTSHSTNRLCDSRYSVAPAEIEGILLKDPGVKDAAVIGVMLPDGSSEVPRAYVVRAGISPESTADQLTDLVQTQLASYKALDGGVVFVDEIPRTGIGKPHRARLSQLDREREKLASILGVSVPA</sequence>
<gene>
    <name evidence="6" type="primary">pyr1</name>
    <name type="ORF">AFUA_6G13920</name>
</gene>
<accession>Q4WLD5</accession>
<comment type="function">
    <text evidence="4 8 9">Nicotinic acid-CoA ligase; part of the gene cluster that mediates the biosynthesis of pyripyropene A, a specific human acyl-coenzyme A:cholesterol acyltransferase 2 inhibitor (PubMed:20861902). The first step of the pathway is the synthesis of nicotinyl-CoA from nicotinic acid by the nicotinic acid-CoA ligase pyr1 (PubMed:20861902). Nicotinyl-CoA is then a substrate of polyketide synthase pyr2 to produce 4-hydroxy-6-(3-pyridinyl)-2H-pyran-2-one (HPPO) which is further prenylated by the polyprenyl transferase pyr6 to yield farnesyl-HPPO (PubMed:20861902). The next steps consist of an epoxidation of farnesyl-HPPO to epoxyfarnesyl-HPPO by FAD-dependent monooxygenase pyr5 and a cyclization of the terpenoid portion by the terpene cyclase pyr4 to yield deacetyl-pyripyropene E (PubMed:20861902). The 2 cytochrome P450 monooxygenases pyr3 and pyr9, and the 2 acetyltransferases pyr7 and pyr8 are involved in the conversion of deacetyl-pyripyropene E into pyripyropene A through several cycles of oxidation and acetylation steps (PubMed:20861902). Pyr7 acetylates deacetyl-pyripyropene E to pyripyropene E which is oxidized to 11-deacetyl-pyripyropene O by pyr3, which is in turn acetylated into pyripyropene O by pyr8 (PubMed:21224862, PubMed:26019565). Pyripyropene O is then oxidized to deacetyl-pyripyropene A by pyr9 (PubMed:21224862). Deacetyl-pyripyropene A is finally acetylated to pyripyropene A by pyr8 (PubMed:26019565).</text>
</comment>
<comment type="catalytic activity">
    <reaction evidence="4">
        <text>nicotinate + ATP + CoA = nicotinyl-CoA + AMP + diphosphate</text>
        <dbReference type="Rhea" id="RHEA:64332"/>
        <dbReference type="ChEBI" id="CHEBI:30616"/>
        <dbReference type="ChEBI" id="CHEBI:32544"/>
        <dbReference type="ChEBI" id="CHEBI:33019"/>
        <dbReference type="ChEBI" id="CHEBI:57287"/>
        <dbReference type="ChEBI" id="CHEBI:149703"/>
        <dbReference type="ChEBI" id="CHEBI:456215"/>
    </reaction>
    <physiologicalReaction direction="left-to-right" evidence="4">
        <dbReference type="Rhea" id="RHEA:64333"/>
    </physiologicalReaction>
</comment>
<comment type="pathway">
    <text evidence="4">Secondary metabolite biosynthesis; terpenoid biosynthesis.</text>
</comment>
<comment type="biotechnology">
    <text evidence="2 3 5">Pyripyropene A and its derivatives have very unique characteristics of selectively inhibiting the acyl-coenzyme A:cholesterol acyltransferase 2 (ACAT2) isozyme (PubMed:18997389). Therefore, pyripyropenes are expected to be developed as a new type of anti-atherosclerotic agent (PubMed:18997389). Furthermore, pyripyropenes have been shown to exhibit anti-angiogenic activity against human umbilical vein endothelial cells (PubMed:19571395). Finally, pyripyropene A also exhibits insecticidal properties (PubMed:8534106).</text>
</comment>
<comment type="similarity">
    <text evidence="7">Belongs to the ATP-dependent AMP-binding enzyme family.</text>
</comment>
<keyword id="KW-0067">ATP-binding</keyword>
<keyword id="KW-0436">Ligase</keyword>
<keyword id="KW-0547">Nucleotide-binding</keyword>
<keyword id="KW-1185">Reference proteome</keyword>
<evidence type="ECO:0000255" key="1"/>
<evidence type="ECO:0000269" key="2">
    <source>
    </source>
</evidence>
<evidence type="ECO:0000269" key="3">
    <source>
    </source>
</evidence>
<evidence type="ECO:0000269" key="4">
    <source>
    </source>
</evidence>
<evidence type="ECO:0000269" key="5">
    <source>
    </source>
</evidence>
<evidence type="ECO:0000303" key="6">
    <source>
    </source>
</evidence>
<evidence type="ECO:0000305" key="7"/>
<evidence type="ECO:0000305" key="8">
    <source>
    </source>
</evidence>
<evidence type="ECO:0000305" key="9">
    <source>
    </source>
</evidence>
<feature type="chain" id="PRO_0000436771" description="Nicotinic acid-CoA ligase pyr1">
    <location>
        <begin position="1"/>
        <end position="581"/>
    </location>
</feature>
<feature type="region of interest" description="AMP-binding" evidence="1">
    <location>
        <begin position="477"/>
        <end position="555"/>
    </location>
</feature>
<feature type="binding site" evidence="1">
    <location>
        <begin position="204"/>
        <end position="215"/>
    </location>
    <ligand>
        <name>AMP</name>
        <dbReference type="ChEBI" id="CHEBI:456215"/>
    </ligand>
</feature>
<proteinExistence type="evidence at protein level"/>
<dbReference type="EC" id="6.2.1.-" evidence="4"/>
<dbReference type="EMBL" id="AAHF01000006">
    <property type="protein sequence ID" value="EAL89229.1"/>
    <property type="molecule type" value="Genomic_DNA"/>
</dbReference>
<dbReference type="RefSeq" id="XP_751267.1">
    <property type="nucleotide sequence ID" value="XM_746174.1"/>
</dbReference>
<dbReference type="SMR" id="Q4WLD5"/>
<dbReference type="STRING" id="330879.Q4WLD5"/>
<dbReference type="EnsemblFungi" id="EAL89229">
    <property type="protein sequence ID" value="EAL89229"/>
    <property type="gene ID" value="AFUA_6G13920"/>
</dbReference>
<dbReference type="GeneID" id="3508582"/>
<dbReference type="KEGG" id="afm:AFUA_6G13920"/>
<dbReference type="VEuPathDB" id="FungiDB:Afu6g13920"/>
<dbReference type="eggNOG" id="KOG1176">
    <property type="taxonomic scope" value="Eukaryota"/>
</dbReference>
<dbReference type="HOGENOM" id="CLU_000022_59_2_1"/>
<dbReference type="InParanoid" id="Q4WLD5"/>
<dbReference type="OMA" id="THHTIIS"/>
<dbReference type="OrthoDB" id="6509636at2759"/>
<dbReference type="UniPathway" id="UPA00213"/>
<dbReference type="Proteomes" id="UP000002530">
    <property type="component" value="Chromosome 6"/>
</dbReference>
<dbReference type="GO" id="GO:0005524">
    <property type="term" value="F:ATP binding"/>
    <property type="evidence" value="ECO:0007669"/>
    <property type="project" value="UniProtKB-KW"/>
</dbReference>
<dbReference type="GO" id="GO:0016405">
    <property type="term" value="F:CoA-ligase activity"/>
    <property type="evidence" value="ECO:0000318"/>
    <property type="project" value="GO_Central"/>
</dbReference>
<dbReference type="GO" id="GO:0016114">
    <property type="term" value="P:terpenoid biosynthetic process"/>
    <property type="evidence" value="ECO:0007669"/>
    <property type="project" value="UniProtKB-UniPathway"/>
</dbReference>
<dbReference type="CDD" id="cd05911">
    <property type="entry name" value="Firefly_Luc_like"/>
    <property type="match status" value="1"/>
</dbReference>
<dbReference type="Gene3D" id="3.30.300.30">
    <property type="match status" value="1"/>
</dbReference>
<dbReference type="Gene3D" id="3.40.50.12780">
    <property type="entry name" value="N-terminal domain of ligase-like"/>
    <property type="match status" value="1"/>
</dbReference>
<dbReference type="InterPro" id="IPR025110">
    <property type="entry name" value="AMP-bd_C"/>
</dbReference>
<dbReference type="InterPro" id="IPR045851">
    <property type="entry name" value="AMP-bd_C_sf"/>
</dbReference>
<dbReference type="InterPro" id="IPR020845">
    <property type="entry name" value="AMP-binding_CS"/>
</dbReference>
<dbReference type="InterPro" id="IPR000873">
    <property type="entry name" value="AMP-dep_synth/lig_dom"/>
</dbReference>
<dbReference type="InterPro" id="IPR042099">
    <property type="entry name" value="ANL_N_sf"/>
</dbReference>
<dbReference type="PANTHER" id="PTHR24096:SF317">
    <property type="entry name" value="ADENYLATE-FORMING ENZYME AFEA"/>
    <property type="match status" value="1"/>
</dbReference>
<dbReference type="PANTHER" id="PTHR24096">
    <property type="entry name" value="LONG-CHAIN-FATTY-ACID--COA LIGASE"/>
    <property type="match status" value="1"/>
</dbReference>
<dbReference type="Pfam" id="PF00501">
    <property type="entry name" value="AMP-binding"/>
    <property type="match status" value="1"/>
</dbReference>
<dbReference type="Pfam" id="PF13193">
    <property type="entry name" value="AMP-binding_C"/>
    <property type="match status" value="1"/>
</dbReference>
<dbReference type="SUPFAM" id="SSF56801">
    <property type="entry name" value="Acetyl-CoA synthetase-like"/>
    <property type="match status" value="1"/>
</dbReference>
<dbReference type="PROSITE" id="PS00455">
    <property type="entry name" value="AMP_BINDING"/>
    <property type="match status" value="1"/>
</dbReference>
<name>PYR1_ASPFU</name>
<protein>
    <recommendedName>
        <fullName evidence="6">Nicotinic acid-CoA ligase pyr1</fullName>
        <ecNumber evidence="4">6.2.1.-</ecNumber>
    </recommendedName>
    <alternativeName>
        <fullName evidence="6">Pyripyropene synthesis protein 1</fullName>
    </alternativeName>
</protein>